<feature type="chain" id="PRO_1000196860" description="Thiazole synthase">
    <location>
        <begin position="1"/>
        <end position="256"/>
    </location>
</feature>
<feature type="active site" description="Schiff-base intermediate with DXP" evidence="1">
    <location>
        <position position="95"/>
    </location>
</feature>
<feature type="binding site" evidence="1">
    <location>
        <position position="156"/>
    </location>
    <ligand>
        <name>1-deoxy-D-xylulose 5-phosphate</name>
        <dbReference type="ChEBI" id="CHEBI:57792"/>
    </ligand>
</feature>
<feature type="binding site" evidence="1">
    <location>
        <begin position="182"/>
        <end position="183"/>
    </location>
    <ligand>
        <name>1-deoxy-D-xylulose 5-phosphate</name>
        <dbReference type="ChEBI" id="CHEBI:57792"/>
    </ligand>
</feature>
<feature type="binding site" evidence="1">
    <location>
        <begin position="204"/>
        <end position="205"/>
    </location>
    <ligand>
        <name>1-deoxy-D-xylulose 5-phosphate</name>
        <dbReference type="ChEBI" id="CHEBI:57792"/>
    </ligand>
</feature>
<accession>B7NRS3</accession>
<protein>
    <recommendedName>
        <fullName evidence="1">Thiazole synthase</fullName>
        <ecNumber evidence="1">2.8.1.10</ecNumber>
    </recommendedName>
</protein>
<proteinExistence type="inferred from homology"/>
<evidence type="ECO:0000255" key="1">
    <source>
        <dbReference type="HAMAP-Rule" id="MF_00443"/>
    </source>
</evidence>
<keyword id="KW-0963">Cytoplasm</keyword>
<keyword id="KW-0704">Schiff base</keyword>
<keyword id="KW-0784">Thiamine biosynthesis</keyword>
<keyword id="KW-0808">Transferase</keyword>
<comment type="function">
    <text evidence="1">Catalyzes the rearrangement of 1-deoxy-D-xylulose 5-phosphate (DXP) to produce the thiazole phosphate moiety of thiamine. Sulfur is provided by the thiocarboxylate moiety of the carrier protein ThiS. In vitro, sulfur can be provided by H(2)S.</text>
</comment>
<comment type="catalytic activity">
    <reaction evidence="1">
        <text>[ThiS sulfur-carrier protein]-C-terminal-Gly-aminoethanethioate + 2-iminoacetate + 1-deoxy-D-xylulose 5-phosphate = [ThiS sulfur-carrier protein]-C-terminal Gly-Gly + 2-[(2R,5Z)-2-carboxy-4-methylthiazol-5(2H)-ylidene]ethyl phosphate + 2 H2O + H(+)</text>
        <dbReference type="Rhea" id="RHEA:26297"/>
        <dbReference type="Rhea" id="RHEA-COMP:12909"/>
        <dbReference type="Rhea" id="RHEA-COMP:19908"/>
        <dbReference type="ChEBI" id="CHEBI:15377"/>
        <dbReference type="ChEBI" id="CHEBI:15378"/>
        <dbReference type="ChEBI" id="CHEBI:57792"/>
        <dbReference type="ChEBI" id="CHEBI:62899"/>
        <dbReference type="ChEBI" id="CHEBI:77846"/>
        <dbReference type="ChEBI" id="CHEBI:90778"/>
        <dbReference type="ChEBI" id="CHEBI:232372"/>
        <dbReference type="EC" id="2.8.1.10"/>
    </reaction>
</comment>
<comment type="pathway">
    <text evidence="1">Cofactor biosynthesis; thiamine diphosphate biosynthesis.</text>
</comment>
<comment type="subunit">
    <text evidence="1">Homotetramer. Forms heterodimers with either ThiH or ThiS.</text>
</comment>
<comment type="subcellular location">
    <subcellularLocation>
        <location evidence="1">Cytoplasm</location>
    </subcellularLocation>
</comment>
<comment type="similarity">
    <text evidence="1">Belongs to the ThiG family.</text>
</comment>
<dbReference type="EC" id="2.8.1.10" evidence="1"/>
<dbReference type="EMBL" id="CU928164">
    <property type="protein sequence ID" value="CAR20486.1"/>
    <property type="molecule type" value="Genomic_DNA"/>
</dbReference>
<dbReference type="RefSeq" id="WP_000944061.1">
    <property type="nucleotide sequence ID" value="NC_011750.1"/>
</dbReference>
<dbReference type="RefSeq" id="YP_002410254.1">
    <property type="nucleotide sequence ID" value="NC_011750.1"/>
</dbReference>
<dbReference type="SMR" id="B7NRS3"/>
<dbReference type="STRING" id="585057.ECIAI39_4380"/>
<dbReference type="KEGG" id="ect:ECIAI39_4380"/>
<dbReference type="PATRIC" id="fig|585057.6.peg.4526"/>
<dbReference type="HOGENOM" id="CLU_062233_1_0_6"/>
<dbReference type="UniPathway" id="UPA00060"/>
<dbReference type="Proteomes" id="UP000000749">
    <property type="component" value="Chromosome"/>
</dbReference>
<dbReference type="GO" id="GO:0005737">
    <property type="term" value="C:cytoplasm"/>
    <property type="evidence" value="ECO:0007669"/>
    <property type="project" value="UniProtKB-SubCell"/>
</dbReference>
<dbReference type="GO" id="GO:1990107">
    <property type="term" value="F:thiazole synthase activity"/>
    <property type="evidence" value="ECO:0007669"/>
    <property type="project" value="UniProtKB-EC"/>
</dbReference>
<dbReference type="GO" id="GO:0009229">
    <property type="term" value="P:thiamine diphosphate biosynthetic process"/>
    <property type="evidence" value="ECO:0007669"/>
    <property type="project" value="UniProtKB-UniRule"/>
</dbReference>
<dbReference type="CDD" id="cd04728">
    <property type="entry name" value="ThiG"/>
    <property type="match status" value="1"/>
</dbReference>
<dbReference type="FunFam" id="3.20.20.70:FF:000049">
    <property type="entry name" value="Thiazole synthase"/>
    <property type="match status" value="1"/>
</dbReference>
<dbReference type="Gene3D" id="3.20.20.70">
    <property type="entry name" value="Aldolase class I"/>
    <property type="match status" value="1"/>
</dbReference>
<dbReference type="HAMAP" id="MF_00443">
    <property type="entry name" value="ThiG"/>
    <property type="match status" value="1"/>
</dbReference>
<dbReference type="InterPro" id="IPR013785">
    <property type="entry name" value="Aldolase_TIM"/>
</dbReference>
<dbReference type="InterPro" id="IPR033983">
    <property type="entry name" value="Thiazole_synthase_ThiG"/>
</dbReference>
<dbReference type="InterPro" id="IPR008867">
    <property type="entry name" value="ThiG"/>
</dbReference>
<dbReference type="PANTHER" id="PTHR34266">
    <property type="entry name" value="THIAZOLE SYNTHASE"/>
    <property type="match status" value="1"/>
</dbReference>
<dbReference type="PANTHER" id="PTHR34266:SF2">
    <property type="entry name" value="THIAZOLE SYNTHASE"/>
    <property type="match status" value="1"/>
</dbReference>
<dbReference type="Pfam" id="PF05690">
    <property type="entry name" value="ThiG"/>
    <property type="match status" value="1"/>
</dbReference>
<dbReference type="SUPFAM" id="SSF110399">
    <property type="entry name" value="ThiG-like"/>
    <property type="match status" value="1"/>
</dbReference>
<gene>
    <name evidence="1" type="primary">thiG</name>
    <name type="ordered locus">ECIAI39_4380</name>
</gene>
<sequence length="256" mass="26915">MLRIADKTFDSHLFTGTGKFASSQLMMEAIRASGSQLVTLAMKRVNLRQHNDAILEPLIAAGVTLLPNTSGVKTAEEAIFAAHLAREALGTNWLKLEIHPDARWLLPDPIETLKAAETLVQQGFVVLPYCGADPVLCKRLEEVGCAAVMPLGAPIGSNQGLETRAMLEIIIQQATVPVVVDAGIGVPSHAAQALEMGADAVLVNTAIAVADDPVNMAKAFRLAVDAGLLARQSGPGSRSHFAHATSPLTGFLEASA</sequence>
<reference key="1">
    <citation type="journal article" date="2009" name="PLoS Genet.">
        <title>Organised genome dynamics in the Escherichia coli species results in highly diverse adaptive paths.</title>
        <authorList>
            <person name="Touchon M."/>
            <person name="Hoede C."/>
            <person name="Tenaillon O."/>
            <person name="Barbe V."/>
            <person name="Baeriswyl S."/>
            <person name="Bidet P."/>
            <person name="Bingen E."/>
            <person name="Bonacorsi S."/>
            <person name="Bouchier C."/>
            <person name="Bouvet O."/>
            <person name="Calteau A."/>
            <person name="Chiapello H."/>
            <person name="Clermont O."/>
            <person name="Cruveiller S."/>
            <person name="Danchin A."/>
            <person name="Diard M."/>
            <person name="Dossat C."/>
            <person name="Karoui M.E."/>
            <person name="Frapy E."/>
            <person name="Garry L."/>
            <person name="Ghigo J.M."/>
            <person name="Gilles A.M."/>
            <person name="Johnson J."/>
            <person name="Le Bouguenec C."/>
            <person name="Lescat M."/>
            <person name="Mangenot S."/>
            <person name="Martinez-Jehanne V."/>
            <person name="Matic I."/>
            <person name="Nassif X."/>
            <person name="Oztas S."/>
            <person name="Petit M.A."/>
            <person name="Pichon C."/>
            <person name="Rouy Z."/>
            <person name="Ruf C.S."/>
            <person name="Schneider D."/>
            <person name="Tourret J."/>
            <person name="Vacherie B."/>
            <person name="Vallenet D."/>
            <person name="Medigue C."/>
            <person name="Rocha E.P.C."/>
            <person name="Denamur E."/>
        </authorList>
    </citation>
    <scope>NUCLEOTIDE SEQUENCE [LARGE SCALE GENOMIC DNA]</scope>
    <source>
        <strain>IAI39 / ExPEC</strain>
    </source>
</reference>
<name>THIG_ECO7I</name>
<organism>
    <name type="scientific">Escherichia coli O7:K1 (strain IAI39 / ExPEC)</name>
    <dbReference type="NCBI Taxonomy" id="585057"/>
    <lineage>
        <taxon>Bacteria</taxon>
        <taxon>Pseudomonadati</taxon>
        <taxon>Pseudomonadota</taxon>
        <taxon>Gammaproteobacteria</taxon>
        <taxon>Enterobacterales</taxon>
        <taxon>Enterobacteriaceae</taxon>
        <taxon>Escherichia</taxon>
    </lineage>
</organism>